<reference key="1">
    <citation type="journal article" date="2001" name="Microb. Drug Resist.">
        <title>Annotated draft genomic sequence from a Streptococcus pneumoniae type 19F clinical isolate.</title>
        <authorList>
            <person name="Dopazo J."/>
            <person name="Mendoza A."/>
            <person name="Herrero J."/>
            <person name="Caldara F."/>
            <person name="Humbert Y."/>
            <person name="Friedli L."/>
            <person name="Guerrier M."/>
            <person name="Grand-Schenk E."/>
            <person name="Gandin C."/>
            <person name="de Francesco M."/>
            <person name="Polissi A."/>
            <person name="Buell G."/>
            <person name="Feger G."/>
            <person name="Garcia E."/>
            <person name="Peitsch M."/>
            <person name="Garcia-Bustos J.F."/>
        </authorList>
    </citation>
    <scope>NUCLEOTIDE SEQUENCE [LARGE SCALE GENOMIC DNA]</scope>
    <source>
        <strain>G54</strain>
    </source>
</reference>
<reference key="2">
    <citation type="submission" date="2008-03" db="EMBL/GenBank/DDBJ databases">
        <title>Pneumococcal beta glucoside metabolism investigated by whole genome comparison.</title>
        <authorList>
            <person name="Mulas L."/>
            <person name="Trappetti C."/>
            <person name="Hakenbeck R."/>
            <person name="Iannelli F."/>
            <person name="Pozzi G."/>
            <person name="Davidsen T.M."/>
            <person name="Tettelin H."/>
            <person name="Oggioni M."/>
        </authorList>
    </citation>
    <scope>NUCLEOTIDE SEQUENCE [LARGE SCALE GENOMIC DNA]</scope>
    <source>
        <strain>G54</strain>
    </source>
</reference>
<keyword id="KW-0963">Cytoplasm</keyword>
<keyword id="KW-0488">Methylation</keyword>
<keyword id="KW-0648">Protein biosynthesis</keyword>
<organism>
    <name type="scientific">Streptococcus pneumoniae serotype 19F (strain G54)</name>
    <dbReference type="NCBI Taxonomy" id="512566"/>
    <lineage>
        <taxon>Bacteria</taxon>
        <taxon>Bacillati</taxon>
        <taxon>Bacillota</taxon>
        <taxon>Bacilli</taxon>
        <taxon>Lactobacillales</taxon>
        <taxon>Streptococcaceae</taxon>
        <taxon>Streptococcus</taxon>
    </lineage>
</organism>
<comment type="function">
    <text evidence="1">Peptide chain release factor 1 directs the termination of translation in response to the peptide chain termination codons UAG and UAA.</text>
</comment>
<comment type="subcellular location">
    <subcellularLocation>
        <location evidence="1">Cytoplasm</location>
    </subcellularLocation>
</comment>
<comment type="PTM">
    <text evidence="1">Methylated by PrmC. Methylation increases the termination efficiency of RF1.</text>
</comment>
<comment type="similarity">
    <text evidence="1">Belongs to the prokaryotic/mitochondrial release factor family.</text>
</comment>
<evidence type="ECO:0000255" key="1">
    <source>
        <dbReference type="HAMAP-Rule" id="MF_00093"/>
    </source>
</evidence>
<gene>
    <name evidence="1" type="primary">prfA</name>
    <name type="ordered locus">SPG_0945</name>
</gene>
<feature type="chain" id="PRO_1000093511" description="Peptide chain release factor 1">
    <location>
        <begin position="1"/>
        <end position="359"/>
    </location>
</feature>
<feature type="modified residue" description="N5-methylglutamine" evidence="1">
    <location>
        <position position="236"/>
    </location>
</feature>
<dbReference type="EMBL" id="CP001015">
    <property type="protein sequence ID" value="ACF56259.1"/>
    <property type="molecule type" value="Genomic_DNA"/>
</dbReference>
<dbReference type="KEGG" id="spx:SPG_0945"/>
<dbReference type="HOGENOM" id="CLU_036856_0_1_9"/>
<dbReference type="GO" id="GO:0005737">
    <property type="term" value="C:cytoplasm"/>
    <property type="evidence" value="ECO:0007669"/>
    <property type="project" value="UniProtKB-SubCell"/>
</dbReference>
<dbReference type="GO" id="GO:0016149">
    <property type="term" value="F:translation release factor activity, codon specific"/>
    <property type="evidence" value="ECO:0007669"/>
    <property type="project" value="UniProtKB-UniRule"/>
</dbReference>
<dbReference type="FunFam" id="3.30.160.20:FF:000027">
    <property type="entry name" value="Peptide chain release factor 1"/>
    <property type="match status" value="1"/>
</dbReference>
<dbReference type="FunFam" id="3.30.70.1660:FF:000002">
    <property type="entry name" value="Peptide chain release factor 1"/>
    <property type="match status" value="1"/>
</dbReference>
<dbReference type="FunFam" id="3.30.70.1660:FF:000004">
    <property type="entry name" value="Peptide chain release factor 1"/>
    <property type="match status" value="1"/>
</dbReference>
<dbReference type="Gene3D" id="3.30.160.20">
    <property type="match status" value="1"/>
</dbReference>
<dbReference type="Gene3D" id="3.30.70.1660">
    <property type="match status" value="2"/>
</dbReference>
<dbReference type="Gene3D" id="6.10.140.1950">
    <property type="match status" value="1"/>
</dbReference>
<dbReference type="HAMAP" id="MF_00093">
    <property type="entry name" value="Rel_fac_1"/>
    <property type="match status" value="1"/>
</dbReference>
<dbReference type="InterPro" id="IPR005139">
    <property type="entry name" value="PCRF"/>
</dbReference>
<dbReference type="InterPro" id="IPR000352">
    <property type="entry name" value="Pep_chain_release_fac_I"/>
</dbReference>
<dbReference type="InterPro" id="IPR045853">
    <property type="entry name" value="Pep_chain_release_fac_I_sf"/>
</dbReference>
<dbReference type="InterPro" id="IPR050057">
    <property type="entry name" value="Prokaryotic/Mito_RF"/>
</dbReference>
<dbReference type="InterPro" id="IPR004373">
    <property type="entry name" value="RF-1"/>
</dbReference>
<dbReference type="NCBIfam" id="TIGR00019">
    <property type="entry name" value="prfA"/>
    <property type="match status" value="1"/>
</dbReference>
<dbReference type="NCBIfam" id="NF001859">
    <property type="entry name" value="PRK00591.1"/>
    <property type="match status" value="1"/>
</dbReference>
<dbReference type="PANTHER" id="PTHR43804">
    <property type="entry name" value="LD18447P"/>
    <property type="match status" value="1"/>
</dbReference>
<dbReference type="PANTHER" id="PTHR43804:SF7">
    <property type="entry name" value="LD18447P"/>
    <property type="match status" value="1"/>
</dbReference>
<dbReference type="Pfam" id="PF03462">
    <property type="entry name" value="PCRF"/>
    <property type="match status" value="1"/>
</dbReference>
<dbReference type="Pfam" id="PF00472">
    <property type="entry name" value="RF-1"/>
    <property type="match status" value="1"/>
</dbReference>
<dbReference type="SMART" id="SM00937">
    <property type="entry name" value="PCRF"/>
    <property type="match status" value="1"/>
</dbReference>
<dbReference type="SUPFAM" id="SSF75620">
    <property type="entry name" value="Release factor"/>
    <property type="match status" value="1"/>
</dbReference>
<dbReference type="PROSITE" id="PS00745">
    <property type="entry name" value="RF_PROK_I"/>
    <property type="match status" value="1"/>
</dbReference>
<protein>
    <recommendedName>
        <fullName evidence="1">Peptide chain release factor 1</fullName>
        <shortName evidence="1">RF-1</shortName>
    </recommendedName>
</protein>
<sequence>MNIYDQLQAVEDRYEELGELLSDPDVVSDTKRFMELSKEEASNRDTVIAYREYKQVLQNIVDAEEMIKESGGDADLEEMAKQELKDAKAEKEEYEEKLKILLLPKDPNDDKNIILEIRGAAGGDEAALFAGDLLTMYQKYAEAQGWRFEVMEASMNGVGGFKEVVAMVSGQSVYSKLKYESGAHRVQRVPVTESQGRVHTSTATVLVMPEVEEVEXDIDPKDLRVDIYHASGAGGQNVNKVATAVRIVHLPTNIKVEMQEERTQQKNREKAMKIIRARVADHFAQIAQDEQDAERKSTIGTGDRSERIRTYNFPQNRVTDHRIGLTLQKLDTILSGKLDEVVDALVLYDQTQKLEELNK</sequence>
<name>RF1_STRP4</name>
<accession>B5E4D9</accession>
<proteinExistence type="inferred from homology"/>